<organism>
    <name type="scientific">Streptococcus mutans serotype c (strain ATCC 700610 / UA159)</name>
    <dbReference type="NCBI Taxonomy" id="210007"/>
    <lineage>
        <taxon>Bacteria</taxon>
        <taxon>Bacillati</taxon>
        <taxon>Bacillota</taxon>
        <taxon>Bacilli</taxon>
        <taxon>Lactobacillales</taxon>
        <taxon>Streptococcaceae</taxon>
        <taxon>Streptococcus</taxon>
    </lineage>
</organism>
<proteinExistence type="inferred from homology"/>
<accession>P59161</accession>
<comment type="function">
    <text evidence="1">Catalyzes the interconversion of 2-phosphoglycerate and 3-phosphoglycerate.</text>
</comment>
<comment type="catalytic activity">
    <reaction evidence="1">
        <text>(2R)-2-phosphoglycerate = (2R)-3-phosphoglycerate</text>
        <dbReference type="Rhea" id="RHEA:15901"/>
        <dbReference type="ChEBI" id="CHEBI:58272"/>
        <dbReference type="ChEBI" id="CHEBI:58289"/>
        <dbReference type="EC" id="5.4.2.11"/>
    </reaction>
</comment>
<comment type="pathway">
    <text evidence="1">Carbohydrate degradation; glycolysis; pyruvate from D-glyceraldehyde 3-phosphate: step 3/5.</text>
</comment>
<comment type="similarity">
    <text evidence="1">Belongs to the phosphoglycerate mutase family. BPG-dependent PGAM subfamily.</text>
</comment>
<evidence type="ECO:0000255" key="1">
    <source>
        <dbReference type="HAMAP-Rule" id="MF_01039"/>
    </source>
</evidence>
<protein>
    <recommendedName>
        <fullName evidence="1">2,3-bisphosphoglycerate-dependent phosphoglycerate mutase</fullName>
        <shortName evidence="1">BPG-dependent PGAM</shortName>
        <shortName evidence="1">PGAM</shortName>
        <shortName evidence="1">Phosphoglyceromutase</shortName>
        <shortName evidence="1">dPGM</shortName>
        <ecNumber evidence="1">5.4.2.11</ecNumber>
    </recommendedName>
</protein>
<keyword id="KW-0312">Gluconeogenesis</keyword>
<keyword id="KW-0324">Glycolysis</keyword>
<keyword id="KW-0413">Isomerase</keyword>
<keyword id="KW-1185">Reference proteome</keyword>
<reference key="1">
    <citation type="journal article" date="2002" name="Proc. Natl. Acad. Sci. U.S.A.">
        <title>Genome sequence of Streptococcus mutans UA159, a cariogenic dental pathogen.</title>
        <authorList>
            <person name="Ajdic D.J."/>
            <person name="McShan W.M."/>
            <person name="McLaughlin R.E."/>
            <person name="Savic G."/>
            <person name="Chang J."/>
            <person name="Carson M.B."/>
            <person name="Primeaux C."/>
            <person name="Tian R."/>
            <person name="Kenton S."/>
            <person name="Jia H.G."/>
            <person name="Lin S.P."/>
            <person name="Qian Y."/>
            <person name="Li S."/>
            <person name="Zhu H."/>
            <person name="Najar F.Z."/>
            <person name="Lai H."/>
            <person name="White J."/>
            <person name="Roe B.A."/>
            <person name="Ferretti J.J."/>
        </authorList>
    </citation>
    <scope>NUCLEOTIDE SEQUENCE [LARGE SCALE GENOMIC DNA]</scope>
    <source>
        <strain>ATCC 700610 / UA159</strain>
    </source>
</reference>
<sequence>MVKLVFARHGESEWNKANLFTGWADVDLSEEGTQQAIDAGKLIKEADIKFDLAFTSVLTRAIKTTNLALEYSDQLWVPVEKSWRLNERHYGGLTGKNKAEAAEKFGDEQVHIWRRSYDVLPPAMAKDDPYSAHTDRRYANLDDTVIPDAENLKVTLERALPYWEDKIAPALKDGKNVFVGAHGNSIRALVKHIKQLSDDDIMGVEIPNFPPLVFEFDENLNVTAEYYLGK</sequence>
<name>GPMA_STRMU</name>
<feature type="chain" id="PRO_0000179924" description="2,3-bisphosphoglycerate-dependent phosphoglycerate mutase">
    <location>
        <begin position="1"/>
        <end position="230"/>
    </location>
</feature>
<feature type="active site" description="Tele-phosphohistidine intermediate" evidence="1">
    <location>
        <position position="9"/>
    </location>
</feature>
<feature type="active site" description="Proton donor/acceptor" evidence="1">
    <location>
        <position position="87"/>
    </location>
</feature>
<feature type="binding site" evidence="1">
    <location>
        <begin position="8"/>
        <end position="15"/>
    </location>
    <ligand>
        <name>substrate</name>
    </ligand>
</feature>
<feature type="binding site" evidence="1">
    <location>
        <begin position="21"/>
        <end position="22"/>
    </location>
    <ligand>
        <name>substrate</name>
    </ligand>
</feature>
<feature type="binding site" evidence="1">
    <location>
        <position position="60"/>
    </location>
    <ligand>
        <name>substrate</name>
    </ligand>
</feature>
<feature type="binding site" evidence="1">
    <location>
        <begin position="87"/>
        <end position="90"/>
    </location>
    <ligand>
        <name>substrate</name>
    </ligand>
</feature>
<feature type="binding site" evidence="1">
    <location>
        <position position="98"/>
    </location>
    <ligand>
        <name>substrate</name>
    </ligand>
</feature>
<feature type="binding site" evidence="1">
    <location>
        <begin position="114"/>
        <end position="115"/>
    </location>
    <ligand>
        <name>substrate</name>
    </ligand>
</feature>
<feature type="binding site" evidence="1">
    <location>
        <begin position="183"/>
        <end position="184"/>
    </location>
    <ligand>
        <name>substrate</name>
    </ligand>
</feature>
<feature type="site" description="Transition state stabilizer" evidence="1">
    <location>
        <position position="182"/>
    </location>
</feature>
<gene>
    <name evidence="1" type="primary">gpmA</name>
    <name type="synonym">pmgY</name>
    <name type="ordered locus">SMU_596</name>
</gene>
<dbReference type="EC" id="5.4.2.11" evidence="1"/>
<dbReference type="EMBL" id="AE014133">
    <property type="protein sequence ID" value="AAN58335.1"/>
    <property type="molecule type" value="Genomic_DNA"/>
</dbReference>
<dbReference type="RefSeq" id="NP_721029.1">
    <property type="nucleotide sequence ID" value="NC_004350.2"/>
</dbReference>
<dbReference type="RefSeq" id="WP_002263252.1">
    <property type="nucleotide sequence ID" value="NC_004350.2"/>
</dbReference>
<dbReference type="SMR" id="P59161"/>
<dbReference type="STRING" id="210007.SMU_596"/>
<dbReference type="KEGG" id="smu:SMU_596"/>
<dbReference type="PATRIC" id="fig|210007.7.peg.529"/>
<dbReference type="eggNOG" id="COG0588">
    <property type="taxonomic scope" value="Bacteria"/>
</dbReference>
<dbReference type="HOGENOM" id="CLU_033323_1_5_9"/>
<dbReference type="OrthoDB" id="9781415at2"/>
<dbReference type="PhylomeDB" id="P59161"/>
<dbReference type="UniPathway" id="UPA00109">
    <property type="reaction ID" value="UER00186"/>
</dbReference>
<dbReference type="Proteomes" id="UP000002512">
    <property type="component" value="Chromosome"/>
</dbReference>
<dbReference type="GO" id="GO:0004619">
    <property type="term" value="F:phosphoglycerate mutase activity"/>
    <property type="evidence" value="ECO:0007669"/>
    <property type="project" value="UniProtKB-EC"/>
</dbReference>
<dbReference type="GO" id="GO:0006094">
    <property type="term" value="P:gluconeogenesis"/>
    <property type="evidence" value="ECO:0007669"/>
    <property type="project" value="UniProtKB-UniRule"/>
</dbReference>
<dbReference type="GO" id="GO:0006096">
    <property type="term" value="P:glycolytic process"/>
    <property type="evidence" value="ECO:0007669"/>
    <property type="project" value="UniProtKB-UniRule"/>
</dbReference>
<dbReference type="CDD" id="cd07067">
    <property type="entry name" value="HP_PGM_like"/>
    <property type="match status" value="1"/>
</dbReference>
<dbReference type="FunFam" id="3.40.50.1240:FF:000003">
    <property type="entry name" value="2,3-bisphosphoglycerate-dependent phosphoglycerate mutase"/>
    <property type="match status" value="1"/>
</dbReference>
<dbReference type="Gene3D" id="3.40.50.1240">
    <property type="entry name" value="Phosphoglycerate mutase-like"/>
    <property type="match status" value="1"/>
</dbReference>
<dbReference type="HAMAP" id="MF_01039">
    <property type="entry name" value="PGAM_GpmA"/>
    <property type="match status" value="1"/>
</dbReference>
<dbReference type="InterPro" id="IPR013078">
    <property type="entry name" value="His_Pase_superF_clade-1"/>
</dbReference>
<dbReference type="InterPro" id="IPR029033">
    <property type="entry name" value="His_PPase_superfam"/>
</dbReference>
<dbReference type="InterPro" id="IPR005952">
    <property type="entry name" value="Phosphogly_mut1"/>
</dbReference>
<dbReference type="NCBIfam" id="TIGR01258">
    <property type="entry name" value="pgm_1"/>
    <property type="match status" value="1"/>
</dbReference>
<dbReference type="NCBIfam" id="NF010713">
    <property type="entry name" value="PRK14115.1"/>
    <property type="match status" value="1"/>
</dbReference>
<dbReference type="NCBIfam" id="NF010715">
    <property type="entry name" value="PRK14117.1"/>
    <property type="match status" value="1"/>
</dbReference>
<dbReference type="PANTHER" id="PTHR11931">
    <property type="entry name" value="PHOSPHOGLYCERATE MUTASE"/>
    <property type="match status" value="1"/>
</dbReference>
<dbReference type="Pfam" id="PF00300">
    <property type="entry name" value="His_Phos_1"/>
    <property type="match status" value="1"/>
</dbReference>
<dbReference type="PIRSF" id="PIRSF000709">
    <property type="entry name" value="6PFK_2-Ptase"/>
    <property type="match status" value="1"/>
</dbReference>
<dbReference type="SMART" id="SM00855">
    <property type="entry name" value="PGAM"/>
    <property type="match status" value="1"/>
</dbReference>
<dbReference type="SUPFAM" id="SSF53254">
    <property type="entry name" value="Phosphoglycerate mutase-like"/>
    <property type="match status" value="1"/>
</dbReference>